<geneLocation type="chloroplast"/>
<keyword id="KW-0150">Chloroplast</keyword>
<keyword id="KW-0249">Electron transport</keyword>
<keyword id="KW-0472">Membrane</keyword>
<keyword id="KW-0602">Photosynthesis</keyword>
<keyword id="KW-0934">Plastid</keyword>
<keyword id="KW-1185">Reference proteome</keyword>
<keyword id="KW-0793">Thylakoid</keyword>
<keyword id="KW-0812">Transmembrane</keyword>
<keyword id="KW-1133">Transmembrane helix</keyword>
<keyword id="KW-0813">Transport</keyword>
<sequence>MLTITSYFGFLLAALTLTLALFIGLNKIRLI</sequence>
<dbReference type="EMBL" id="X15901">
    <property type="protein sequence ID" value="CAA33966.1"/>
    <property type="molecule type" value="Genomic_DNA"/>
</dbReference>
<dbReference type="EMBL" id="AY522330">
    <property type="status" value="NOT_ANNOTATED_CDS"/>
    <property type="molecule type" value="Genomic_DNA"/>
</dbReference>
<dbReference type="PIR" id="S05124">
    <property type="entry name" value="S05124"/>
</dbReference>
<dbReference type="RefSeq" id="NP_039404.1">
    <property type="nucleotide sequence ID" value="NC_001320.1"/>
</dbReference>
<dbReference type="SMR" id="P12180"/>
<dbReference type="PaxDb" id="39947-P12180"/>
<dbReference type="GeneID" id="3131472"/>
<dbReference type="KEGG" id="dosa:CAA33966.1"/>
<dbReference type="KEGG" id="osa:3131472"/>
<dbReference type="InParanoid" id="P12180"/>
<dbReference type="Proteomes" id="UP000059680">
    <property type="component" value="Chloroplast"/>
</dbReference>
<dbReference type="GO" id="GO:0009535">
    <property type="term" value="C:chloroplast thylakoid membrane"/>
    <property type="evidence" value="ECO:0007669"/>
    <property type="project" value="UniProtKB-SubCell"/>
</dbReference>
<dbReference type="GO" id="GO:0009512">
    <property type="term" value="C:cytochrome b6f complex"/>
    <property type="evidence" value="ECO:0007669"/>
    <property type="project" value="InterPro"/>
</dbReference>
<dbReference type="GO" id="GO:0009536">
    <property type="term" value="C:plastid"/>
    <property type="evidence" value="ECO:0000250"/>
    <property type="project" value="Gramene"/>
</dbReference>
<dbReference type="GO" id="GO:0045158">
    <property type="term" value="F:electron transporter, transferring electrons within cytochrome b6/f complex of photosystem II activity"/>
    <property type="evidence" value="ECO:0007669"/>
    <property type="project" value="UniProtKB-UniRule"/>
</dbReference>
<dbReference type="GO" id="GO:0015979">
    <property type="term" value="P:photosynthesis"/>
    <property type="evidence" value="ECO:0007669"/>
    <property type="project" value="UniProtKB-KW"/>
</dbReference>
<dbReference type="HAMAP" id="MF_00433">
    <property type="entry name" value="Cytb6_f_PetL"/>
    <property type="match status" value="1"/>
</dbReference>
<dbReference type="InterPro" id="IPR007802">
    <property type="entry name" value="Cyt_b6/f_cplx_su6"/>
</dbReference>
<dbReference type="PANTHER" id="PTHR37266">
    <property type="entry name" value="CYTOCHROME B6-F COMPLEX SUBUNIT 6"/>
    <property type="match status" value="1"/>
</dbReference>
<dbReference type="PANTHER" id="PTHR37266:SF1">
    <property type="entry name" value="CYTOCHROME B6-F COMPLEX SUBUNIT 6"/>
    <property type="match status" value="1"/>
</dbReference>
<dbReference type="Pfam" id="PF05115">
    <property type="entry name" value="PetL"/>
    <property type="match status" value="1"/>
</dbReference>
<dbReference type="SUPFAM" id="SSF103436">
    <property type="entry name" value="PetL subunit of the cytochrome b6f complex"/>
    <property type="match status" value="1"/>
</dbReference>
<comment type="function">
    <text evidence="1">Component of the cytochrome b6-f complex, which mediates electron transfer between photosystem II (PSII) and photosystem I (PSI), cyclic electron flow around PSI, and state transitions. PetL is important for photoautotrophic growth as well as for electron transfer efficiency and stability of the cytochrome b6-f complex.</text>
</comment>
<comment type="subunit">
    <text evidence="1">The 4 large subunits of the cytochrome b6-f complex are cytochrome b6, subunit IV (17 kDa polypeptide, PetD), cytochrome f and the Rieske protein, while the 4 small subunits are PetG, PetL, PetM and PetN. The complex functions as a dimer.</text>
</comment>
<comment type="subcellular location">
    <subcellularLocation>
        <location evidence="1">Plastid</location>
        <location evidence="1">Chloroplast thylakoid membrane</location>
        <topology evidence="1">Single-pass membrane protein</topology>
    </subcellularLocation>
</comment>
<comment type="similarity">
    <text evidence="1">Belongs to the PetL family.</text>
</comment>
<reference key="1">
    <citation type="journal article" date="1989" name="Mol. Gen. Genet.">
        <title>The complete sequence of the rice (Oryza sativa) chloroplast genome: intermolecular recombination between distinct tRNA genes accounts for a major plastid DNA inversion during the evolution of the cereals.</title>
        <authorList>
            <person name="Hiratsuka J."/>
            <person name="Shimada H."/>
            <person name="Whittier R."/>
            <person name="Ishibashi T."/>
            <person name="Sakamoto M."/>
            <person name="Mori M."/>
            <person name="Kondo C."/>
            <person name="Honji Y."/>
            <person name="Sun C.-R."/>
            <person name="Meng B.-Y."/>
            <person name="Li Y.-Q."/>
            <person name="Kanno A."/>
            <person name="Nishizawa Y."/>
            <person name="Hirai A."/>
            <person name="Shinozaki K."/>
            <person name="Sugiura M."/>
        </authorList>
    </citation>
    <scope>NUCLEOTIDE SEQUENCE [LARGE SCALE GENOMIC DNA]</scope>
    <source>
        <strain>cv. Nipponbare</strain>
    </source>
</reference>
<reference key="2">
    <citation type="journal article" date="2004" name="Plant Physiol.">
        <title>A comparison of rice chloroplast genomes.</title>
        <authorList>
            <person name="Tang J."/>
            <person name="Xia H."/>
            <person name="Cao M."/>
            <person name="Zhang X."/>
            <person name="Zeng W."/>
            <person name="Hu S."/>
            <person name="Tong W."/>
            <person name="Wang J."/>
            <person name="Wang J."/>
            <person name="Yu J."/>
            <person name="Yang H."/>
            <person name="Zhu L."/>
        </authorList>
    </citation>
    <scope>NUCLEOTIDE SEQUENCE [LARGE SCALE GENOMIC DNA]</scope>
    <source>
        <strain>cv. Nipponbare</strain>
    </source>
</reference>
<evidence type="ECO:0000255" key="1">
    <source>
        <dbReference type="HAMAP-Rule" id="MF_00433"/>
    </source>
</evidence>
<accession>P12180</accession>
<proteinExistence type="inferred from homology"/>
<protein>
    <recommendedName>
        <fullName evidence="1">Cytochrome b6-f complex subunit 6</fullName>
    </recommendedName>
    <alternativeName>
        <fullName evidence="1">Cytochrome b6-f complex subunit PetL</fullName>
    </alternativeName>
    <alternativeName>
        <fullName evidence="1">Cytochrome b6-f complex subunit VI</fullName>
    </alternativeName>
</protein>
<gene>
    <name evidence="1" type="primary">petL</name>
    <name type="ordered locus">LOC_Osp1g00530</name>
</gene>
<organism>
    <name type="scientific">Oryza sativa subsp. japonica</name>
    <name type="common">Rice</name>
    <dbReference type="NCBI Taxonomy" id="39947"/>
    <lineage>
        <taxon>Eukaryota</taxon>
        <taxon>Viridiplantae</taxon>
        <taxon>Streptophyta</taxon>
        <taxon>Embryophyta</taxon>
        <taxon>Tracheophyta</taxon>
        <taxon>Spermatophyta</taxon>
        <taxon>Magnoliopsida</taxon>
        <taxon>Liliopsida</taxon>
        <taxon>Poales</taxon>
        <taxon>Poaceae</taxon>
        <taxon>BOP clade</taxon>
        <taxon>Oryzoideae</taxon>
        <taxon>Oryzeae</taxon>
        <taxon>Oryzinae</taxon>
        <taxon>Oryza</taxon>
        <taxon>Oryza sativa</taxon>
    </lineage>
</organism>
<name>PETL_ORYSJ</name>
<feature type="chain" id="PRO_0000220464" description="Cytochrome b6-f complex subunit 6">
    <location>
        <begin position="1"/>
        <end position="31"/>
    </location>
</feature>
<feature type="transmembrane region" description="Helical" evidence="1">
    <location>
        <begin position="4"/>
        <end position="24"/>
    </location>
</feature>